<proteinExistence type="inferred from homology"/>
<organism>
    <name type="scientific">Rhodopseudomonas palustris (strain BisB18)</name>
    <dbReference type="NCBI Taxonomy" id="316056"/>
    <lineage>
        <taxon>Bacteria</taxon>
        <taxon>Pseudomonadati</taxon>
        <taxon>Pseudomonadota</taxon>
        <taxon>Alphaproteobacteria</taxon>
        <taxon>Hyphomicrobiales</taxon>
        <taxon>Nitrobacteraceae</taxon>
        <taxon>Rhodopseudomonas</taxon>
    </lineage>
</organism>
<comment type="function">
    <text evidence="1">Produces ATP from ADP in the presence of a proton gradient across the membrane. The gamma chain is believed to be important in regulating ATPase activity and the flow of protons through the CF(0) complex.</text>
</comment>
<comment type="subunit">
    <text evidence="1">F-type ATPases have 2 components, CF(1) - the catalytic core - and CF(0) - the membrane proton channel. CF(1) has five subunits: alpha(3), beta(3), gamma(1), delta(1), epsilon(1). CF(0) has three main subunits: a, b and c.</text>
</comment>
<comment type="subcellular location">
    <subcellularLocation>
        <location evidence="1">Cell inner membrane</location>
        <topology evidence="1">Peripheral membrane protein</topology>
    </subcellularLocation>
</comment>
<comment type="similarity">
    <text evidence="1">Belongs to the ATPase gamma chain family.</text>
</comment>
<dbReference type="EMBL" id="CP000301">
    <property type="protein sequence ID" value="ABD85750.1"/>
    <property type="molecule type" value="Genomic_DNA"/>
</dbReference>
<dbReference type="SMR" id="Q21CY6"/>
<dbReference type="STRING" id="316056.RPC_0175"/>
<dbReference type="KEGG" id="rpc:RPC_0175"/>
<dbReference type="eggNOG" id="COG0224">
    <property type="taxonomic scope" value="Bacteria"/>
</dbReference>
<dbReference type="HOGENOM" id="CLU_050669_0_1_5"/>
<dbReference type="OrthoDB" id="9812769at2"/>
<dbReference type="GO" id="GO:0005886">
    <property type="term" value="C:plasma membrane"/>
    <property type="evidence" value="ECO:0007669"/>
    <property type="project" value="UniProtKB-SubCell"/>
</dbReference>
<dbReference type="GO" id="GO:0045259">
    <property type="term" value="C:proton-transporting ATP synthase complex"/>
    <property type="evidence" value="ECO:0007669"/>
    <property type="project" value="UniProtKB-KW"/>
</dbReference>
<dbReference type="GO" id="GO:0005524">
    <property type="term" value="F:ATP binding"/>
    <property type="evidence" value="ECO:0007669"/>
    <property type="project" value="UniProtKB-UniRule"/>
</dbReference>
<dbReference type="GO" id="GO:0046933">
    <property type="term" value="F:proton-transporting ATP synthase activity, rotational mechanism"/>
    <property type="evidence" value="ECO:0007669"/>
    <property type="project" value="UniProtKB-UniRule"/>
</dbReference>
<dbReference type="GO" id="GO:0042777">
    <property type="term" value="P:proton motive force-driven plasma membrane ATP synthesis"/>
    <property type="evidence" value="ECO:0007669"/>
    <property type="project" value="UniProtKB-UniRule"/>
</dbReference>
<dbReference type="CDD" id="cd12151">
    <property type="entry name" value="F1-ATPase_gamma"/>
    <property type="match status" value="1"/>
</dbReference>
<dbReference type="FunFam" id="1.10.287.80:FF:000001">
    <property type="entry name" value="ATP synthase gamma chain"/>
    <property type="match status" value="1"/>
</dbReference>
<dbReference type="Gene3D" id="3.40.1380.10">
    <property type="match status" value="1"/>
</dbReference>
<dbReference type="Gene3D" id="1.10.287.80">
    <property type="entry name" value="ATP synthase, gamma subunit, helix hairpin domain"/>
    <property type="match status" value="1"/>
</dbReference>
<dbReference type="HAMAP" id="MF_00815">
    <property type="entry name" value="ATP_synth_gamma_bact"/>
    <property type="match status" value="1"/>
</dbReference>
<dbReference type="InterPro" id="IPR035968">
    <property type="entry name" value="ATP_synth_F1_ATPase_gsu"/>
</dbReference>
<dbReference type="InterPro" id="IPR000131">
    <property type="entry name" value="ATP_synth_F1_gsu"/>
</dbReference>
<dbReference type="InterPro" id="IPR023632">
    <property type="entry name" value="ATP_synth_F1_gsu_CS"/>
</dbReference>
<dbReference type="NCBIfam" id="TIGR01146">
    <property type="entry name" value="ATPsyn_F1gamma"/>
    <property type="match status" value="1"/>
</dbReference>
<dbReference type="NCBIfam" id="NF004146">
    <property type="entry name" value="PRK05621.1-4"/>
    <property type="match status" value="1"/>
</dbReference>
<dbReference type="PANTHER" id="PTHR11693">
    <property type="entry name" value="ATP SYNTHASE GAMMA CHAIN"/>
    <property type="match status" value="1"/>
</dbReference>
<dbReference type="PANTHER" id="PTHR11693:SF22">
    <property type="entry name" value="ATP SYNTHASE SUBUNIT GAMMA, MITOCHONDRIAL"/>
    <property type="match status" value="1"/>
</dbReference>
<dbReference type="Pfam" id="PF00231">
    <property type="entry name" value="ATP-synt"/>
    <property type="match status" value="1"/>
</dbReference>
<dbReference type="PIRSF" id="PIRSF039089">
    <property type="entry name" value="ATP_synthase_gamma"/>
    <property type="match status" value="1"/>
</dbReference>
<dbReference type="PRINTS" id="PR00126">
    <property type="entry name" value="ATPASEGAMMA"/>
</dbReference>
<dbReference type="SUPFAM" id="SSF52943">
    <property type="entry name" value="ATP synthase (F1-ATPase), gamma subunit"/>
    <property type="match status" value="1"/>
</dbReference>
<dbReference type="PROSITE" id="PS00153">
    <property type="entry name" value="ATPASE_GAMMA"/>
    <property type="match status" value="1"/>
</dbReference>
<sequence length="292" mass="31993">MASLKDMRVRIASTKATQKITKAMQMVAASKLRRAQLAAEAARPYAERMDAVISNIASAAAGSPGAPVLLAGTGKDQVHLLLVCTGERGLSGAFNSSIVRLARERALSLMNQGKEVKLFCVGRKGYEQLRRTFDRQIVENIELRSVRQLGFVNAEDIAHKVVARFNNGEFDVCTLFYSRFKSVISQIPTAQQIIPLVVEAPAANAGPATSYEYEPEEDEILAGLLPRNLAVQIFRALLENNASFYGAQMSAMDNATRNAGDMIRKQTLIYNRTRQAMITKELIEIISGAEAI</sequence>
<evidence type="ECO:0000255" key="1">
    <source>
        <dbReference type="HAMAP-Rule" id="MF_00815"/>
    </source>
</evidence>
<reference key="1">
    <citation type="submission" date="2006-03" db="EMBL/GenBank/DDBJ databases">
        <title>Complete sequence of Rhodopseudomonas palustris BisB18.</title>
        <authorList>
            <consortium name="US DOE Joint Genome Institute"/>
            <person name="Copeland A."/>
            <person name="Lucas S."/>
            <person name="Lapidus A."/>
            <person name="Barry K."/>
            <person name="Detter J.C."/>
            <person name="Glavina del Rio T."/>
            <person name="Hammon N."/>
            <person name="Israni S."/>
            <person name="Dalin E."/>
            <person name="Tice H."/>
            <person name="Pitluck S."/>
            <person name="Chain P."/>
            <person name="Malfatti S."/>
            <person name="Shin M."/>
            <person name="Vergez L."/>
            <person name="Schmutz J."/>
            <person name="Larimer F."/>
            <person name="Land M."/>
            <person name="Hauser L."/>
            <person name="Pelletier D.A."/>
            <person name="Kyrpides N."/>
            <person name="Anderson I."/>
            <person name="Oda Y."/>
            <person name="Harwood C.S."/>
            <person name="Richardson P."/>
        </authorList>
    </citation>
    <scope>NUCLEOTIDE SEQUENCE [LARGE SCALE GENOMIC DNA]</scope>
    <source>
        <strain>BisB18</strain>
    </source>
</reference>
<gene>
    <name evidence="1" type="primary">atpG</name>
    <name type="ordered locus">RPC_0175</name>
</gene>
<accession>Q21CY6</accession>
<protein>
    <recommendedName>
        <fullName evidence="1">ATP synthase gamma chain</fullName>
    </recommendedName>
    <alternativeName>
        <fullName evidence="1">ATP synthase F1 sector gamma subunit</fullName>
    </alternativeName>
    <alternativeName>
        <fullName evidence="1">F-ATPase gamma subunit</fullName>
    </alternativeName>
</protein>
<feature type="chain" id="PRO_1000053306" description="ATP synthase gamma chain">
    <location>
        <begin position="1"/>
        <end position="292"/>
    </location>
</feature>
<name>ATPG_RHOPB</name>
<keyword id="KW-0066">ATP synthesis</keyword>
<keyword id="KW-0997">Cell inner membrane</keyword>
<keyword id="KW-1003">Cell membrane</keyword>
<keyword id="KW-0139">CF(1)</keyword>
<keyword id="KW-0375">Hydrogen ion transport</keyword>
<keyword id="KW-0406">Ion transport</keyword>
<keyword id="KW-0472">Membrane</keyword>
<keyword id="KW-0813">Transport</keyword>